<dbReference type="EMBL" id="BC082055">
    <property type="protein sequence ID" value="AAH82055.1"/>
    <property type="molecule type" value="mRNA"/>
</dbReference>
<dbReference type="EMBL" id="BC091244">
    <property type="protein sequence ID" value="AAH91244.1"/>
    <property type="molecule type" value="mRNA"/>
</dbReference>
<dbReference type="RefSeq" id="NP_001005552.1">
    <property type="nucleotide sequence ID" value="NM_001005552.1"/>
</dbReference>
<dbReference type="SMR" id="Q66H33"/>
<dbReference type="FunCoup" id="Q66H33">
    <property type="interactions" value="3817"/>
</dbReference>
<dbReference type="STRING" id="10116.ENSRNOP00000000911"/>
<dbReference type="PhosphoSitePlus" id="Q66H33"/>
<dbReference type="PaxDb" id="10116-ENSRNOP00000000911"/>
<dbReference type="Ensembl" id="ENSRNOT00000000911.6">
    <property type="protein sequence ID" value="ENSRNOP00000000911.3"/>
    <property type="gene ID" value="ENSRNOG00000000720.6"/>
</dbReference>
<dbReference type="GeneID" id="304176"/>
<dbReference type="KEGG" id="rno:304176"/>
<dbReference type="UCSC" id="RGD:1359320">
    <property type="organism name" value="rat"/>
</dbReference>
<dbReference type="AGR" id="RGD:1359320"/>
<dbReference type="CTD" id="304176"/>
<dbReference type="RGD" id="1359320">
    <property type="gene designation" value="C11h3orf38"/>
</dbReference>
<dbReference type="eggNOG" id="ENOG502RKN5">
    <property type="taxonomic scope" value="Eukaryota"/>
</dbReference>
<dbReference type="GeneTree" id="ENSGT00390000000367"/>
<dbReference type="HOGENOM" id="CLU_060119_0_0_1"/>
<dbReference type="InParanoid" id="Q66H33"/>
<dbReference type="OMA" id="AKEYWCE"/>
<dbReference type="OrthoDB" id="7413at9989"/>
<dbReference type="PhylomeDB" id="Q66H33"/>
<dbReference type="TreeFam" id="TF323327"/>
<dbReference type="PRO" id="PR:Q66H33"/>
<dbReference type="Proteomes" id="UP000002494">
    <property type="component" value="Chromosome 11"/>
</dbReference>
<dbReference type="Bgee" id="ENSRNOG00000000720">
    <property type="expression patterns" value="Expressed in testis and 19 other cell types or tissues"/>
</dbReference>
<dbReference type="GO" id="GO:0005634">
    <property type="term" value="C:nucleus"/>
    <property type="evidence" value="ECO:0000266"/>
    <property type="project" value="RGD"/>
</dbReference>
<dbReference type="GO" id="GO:0006915">
    <property type="term" value="P:apoptotic process"/>
    <property type="evidence" value="ECO:0007669"/>
    <property type="project" value="UniProtKB-KW"/>
</dbReference>
<dbReference type="GO" id="GO:0043065">
    <property type="term" value="P:positive regulation of apoptotic process"/>
    <property type="evidence" value="ECO:0000266"/>
    <property type="project" value="RGD"/>
</dbReference>
<dbReference type="CDD" id="cd00531">
    <property type="entry name" value="NTF2_like"/>
    <property type="match status" value="1"/>
</dbReference>
<dbReference type="InterPro" id="IPR032710">
    <property type="entry name" value="NTF2-like_dom_sf"/>
</dbReference>
<dbReference type="InterPro" id="IPR026698">
    <property type="entry name" value="UPF_C3orf38"/>
</dbReference>
<dbReference type="PANTHER" id="PTHR21084">
    <property type="entry name" value="DENSE INCISORS"/>
    <property type="match status" value="1"/>
</dbReference>
<dbReference type="PANTHER" id="PTHR21084:SF1">
    <property type="entry name" value="DENSE INCISORS"/>
    <property type="match status" value="1"/>
</dbReference>
<dbReference type="Pfam" id="PF15008">
    <property type="entry name" value="DUF4518"/>
    <property type="match status" value="1"/>
</dbReference>
<dbReference type="SUPFAM" id="SSF54427">
    <property type="entry name" value="NTF2-like"/>
    <property type="match status" value="1"/>
</dbReference>
<accession>Q66H33</accession>
<feature type="chain" id="PRO_0000244991" description="Uncharacterized protein C3orf38 homolog">
    <location>
        <begin position="1"/>
        <end position="348"/>
    </location>
</feature>
<protein>
    <recommendedName>
        <fullName>Uncharacterized protein C3orf38 homolog</fullName>
    </recommendedName>
</protein>
<name>CC038_RAT</name>
<reference key="1">
    <citation type="journal article" date="2004" name="Genome Res.">
        <title>The status, quality, and expansion of the NIH full-length cDNA project: the Mammalian Gene Collection (MGC).</title>
        <authorList>
            <consortium name="The MGC Project Team"/>
        </authorList>
    </citation>
    <scope>NUCLEOTIDE SEQUENCE [LARGE SCALE MRNA]</scope>
    <source>
        <tissue>Spleen</tissue>
        <tissue>Testis</tissue>
    </source>
</reference>
<comment type="function">
    <text evidence="1">May be involved in apoptosis regulation.</text>
</comment>
<sequence>MSGLSHLESEGCRNLLGMLDNDEIMALCDTVTNRLVQPVDRQDAIRAILVYSQNVEELLRRKKVHREVIFKYLATQGVVVPPTTEKHGLIQYAKSYWEEQSPKLKETAEPVKKTEDIQLFEQQAKEDKEAEKVDFRRLGEEFCHWFFELLNSQNPFLGPPQDEWGPQHFWHDVKLRFYYNTSEQNMTDYEGAEMVSLRLLSLVKEEFLFLSPNLDSQGLKCASSPHGLVMVGVAGTVHRGNSCLGIFEQIFGLIRSPFVENTWKIKFINLRIVGGSSLAPGSSLKPSVTFEQSDFEAFYNVITLCNTPEVRPNVRQILDSGTGDQVLCSGDEALLNKKEMNLPTPLKH</sequence>
<evidence type="ECO:0000250" key="1"/>
<proteinExistence type="evidence at transcript level"/>
<organism>
    <name type="scientific">Rattus norvegicus</name>
    <name type="common">Rat</name>
    <dbReference type="NCBI Taxonomy" id="10116"/>
    <lineage>
        <taxon>Eukaryota</taxon>
        <taxon>Metazoa</taxon>
        <taxon>Chordata</taxon>
        <taxon>Craniata</taxon>
        <taxon>Vertebrata</taxon>
        <taxon>Euteleostomi</taxon>
        <taxon>Mammalia</taxon>
        <taxon>Eutheria</taxon>
        <taxon>Euarchontoglires</taxon>
        <taxon>Glires</taxon>
        <taxon>Rodentia</taxon>
        <taxon>Myomorpha</taxon>
        <taxon>Muroidea</taxon>
        <taxon>Muridae</taxon>
        <taxon>Murinae</taxon>
        <taxon>Rattus</taxon>
    </lineage>
</organism>
<keyword id="KW-0053">Apoptosis</keyword>
<keyword id="KW-1185">Reference proteome</keyword>